<dbReference type="EC" id="3.1.2.2" evidence="3 6"/>
<dbReference type="EMBL" id="L40401">
    <property type="protein sequence ID" value="AAC42007.1"/>
    <property type="status" value="ALT_FRAME"/>
    <property type="molecule type" value="mRNA"/>
</dbReference>
<dbReference type="EMBL" id="DQ082755">
    <property type="protein sequence ID" value="AAZ31237.1"/>
    <property type="molecule type" value="mRNA"/>
</dbReference>
<dbReference type="EMBL" id="AK001939">
    <property type="protein sequence ID" value="BAA91989.1"/>
    <property type="molecule type" value="mRNA"/>
</dbReference>
<dbReference type="EMBL" id="AK223635">
    <property type="protein sequence ID" value="BAD97355.1"/>
    <property type="molecule type" value="mRNA"/>
</dbReference>
<dbReference type="EMBL" id="BC004436">
    <property type="protein sequence ID" value="AAH04436.2"/>
    <property type="molecule type" value="mRNA"/>
</dbReference>
<dbReference type="EMBL" id="BC006335">
    <property type="protein sequence ID" value="AAH06335.1"/>
    <property type="molecule type" value="mRNA"/>
</dbReference>
<dbReference type="EMBL" id="BC006500">
    <property type="protein sequence ID" value="AAH06500.4"/>
    <property type="molecule type" value="mRNA"/>
</dbReference>
<dbReference type="EMBL" id="AY005822">
    <property type="protein sequence ID" value="AAF97985.1"/>
    <property type="molecule type" value="mRNA"/>
</dbReference>
<dbReference type="CCDS" id="CCDS9816.1">
    <molecule id="P49753-1"/>
</dbReference>
<dbReference type="PIR" id="JC7367">
    <property type="entry name" value="JC7367"/>
</dbReference>
<dbReference type="RefSeq" id="NP_006812.3">
    <molecule id="P49753-1"/>
    <property type="nucleotide sequence ID" value="NM_006821.5"/>
</dbReference>
<dbReference type="PDB" id="3HLK">
    <property type="method" value="X-ray"/>
    <property type="resolution" value="2.10 A"/>
    <property type="chains" value="A/B=46-483"/>
</dbReference>
<dbReference type="PDBsum" id="3HLK"/>
<dbReference type="SMR" id="P49753"/>
<dbReference type="BioGRID" id="116164">
    <property type="interactions" value="132"/>
</dbReference>
<dbReference type="FunCoup" id="P49753">
    <property type="interactions" value="514"/>
</dbReference>
<dbReference type="IntAct" id="P49753">
    <property type="interactions" value="29"/>
</dbReference>
<dbReference type="MINT" id="P49753"/>
<dbReference type="STRING" id="9606.ENSP00000238651"/>
<dbReference type="ChEMBL" id="CHEMBL2189135"/>
<dbReference type="SwissLipids" id="SLP:000000590"/>
<dbReference type="ESTHER" id="human-ACOT2">
    <property type="family name" value="Acyl-CoA_Thioesterase"/>
</dbReference>
<dbReference type="MEROPS" id="S09.942"/>
<dbReference type="CarbonylDB" id="P49753"/>
<dbReference type="GlyGen" id="P49753">
    <property type="glycosylation" value="1 site, 1 O-linked glycan (1 site)"/>
</dbReference>
<dbReference type="iPTMnet" id="P49753"/>
<dbReference type="PhosphoSitePlus" id="P49753"/>
<dbReference type="SwissPalm" id="P49753"/>
<dbReference type="BioMuta" id="ACOT2"/>
<dbReference type="DMDM" id="269849771"/>
<dbReference type="jPOST" id="P49753"/>
<dbReference type="MassIVE" id="P49753"/>
<dbReference type="PaxDb" id="9606-ENSP00000238651"/>
<dbReference type="PeptideAtlas" id="P49753"/>
<dbReference type="ProteomicsDB" id="56066">
    <molecule id="P49753-1"/>
</dbReference>
<dbReference type="ProteomicsDB" id="56067">
    <molecule id="P49753-2"/>
</dbReference>
<dbReference type="Pumba" id="P49753"/>
<dbReference type="Antibodypedia" id="25399">
    <property type="antibodies" value="147 antibodies from 27 providers"/>
</dbReference>
<dbReference type="DNASU" id="10965"/>
<dbReference type="Ensembl" id="ENST00000238651.10">
    <molecule id="P49753-1"/>
    <property type="protein sequence ID" value="ENSP00000238651.5"/>
    <property type="gene ID" value="ENSG00000119673.16"/>
</dbReference>
<dbReference type="GeneID" id="10965"/>
<dbReference type="KEGG" id="hsa:10965"/>
<dbReference type="MANE-Select" id="ENST00000238651.10">
    <property type="protein sequence ID" value="ENSP00000238651.5"/>
    <property type="RefSeq nucleotide sequence ID" value="NM_006821.6"/>
    <property type="RefSeq protein sequence ID" value="NP_006812.3"/>
</dbReference>
<dbReference type="UCSC" id="uc001xon.6">
    <molecule id="P49753-1"/>
    <property type="organism name" value="human"/>
</dbReference>
<dbReference type="AGR" id="HGNC:18431"/>
<dbReference type="CTD" id="10965"/>
<dbReference type="DisGeNET" id="10965"/>
<dbReference type="GeneCards" id="ACOT2"/>
<dbReference type="HGNC" id="HGNC:18431">
    <property type="gene designation" value="ACOT2"/>
</dbReference>
<dbReference type="HPA" id="ENSG00000119673">
    <property type="expression patterns" value="Low tissue specificity"/>
</dbReference>
<dbReference type="MIM" id="609972">
    <property type="type" value="gene"/>
</dbReference>
<dbReference type="neXtProt" id="NX_P49753"/>
<dbReference type="OpenTargets" id="ENSG00000119673"/>
<dbReference type="PharmGKB" id="PA142672653"/>
<dbReference type="VEuPathDB" id="HostDB:ENSG00000119673"/>
<dbReference type="eggNOG" id="ENOG502QQ8Z">
    <property type="taxonomic scope" value="Eukaryota"/>
</dbReference>
<dbReference type="GeneTree" id="ENSGT01010000222336"/>
<dbReference type="InParanoid" id="P49753"/>
<dbReference type="OrthoDB" id="6347013at2759"/>
<dbReference type="PAN-GO" id="P49753">
    <property type="GO annotations" value="3 GO annotations based on evolutionary models"/>
</dbReference>
<dbReference type="PhylomeDB" id="P49753"/>
<dbReference type="TreeFam" id="TF314911"/>
<dbReference type="BioCyc" id="MetaCyc:HS04318-MONOMER"/>
<dbReference type="BRENDA" id="3.1.2.2">
    <property type="organism ID" value="2681"/>
</dbReference>
<dbReference type="PathwayCommons" id="P49753"/>
<dbReference type="Reactome" id="R-HSA-77289">
    <property type="pathway name" value="Mitochondrial Fatty Acid Beta-Oxidation"/>
</dbReference>
<dbReference type="Reactome" id="R-HSA-9033241">
    <property type="pathway name" value="Peroxisomal protein import"/>
</dbReference>
<dbReference type="Reactome" id="R-HSA-9837999">
    <property type="pathway name" value="Mitochondrial protein degradation"/>
</dbReference>
<dbReference type="SABIO-RK" id="P49753"/>
<dbReference type="SignaLink" id="P49753"/>
<dbReference type="SIGNOR" id="P49753"/>
<dbReference type="UniPathway" id="UPA00199"/>
<dbReference type="BioGRID-ORCS" id="10965">
    <property type="hits" value="18 hits in 1148 CRISPR screens"/>
</dbReference>
<dbReference type="ChiTaRS" id="ACOT2">
    <property type="organism name" value="human"/>
</dbReference>
<dbReference type="EvolutionaryTrace" id="P49753"/>
<dbReference type="GeneWiki" id="ACOT2"/>
<dbReference type="GenomeRNAi" id="10965"/>
<dbReference type="Pharos" id="P49753">
    <property type="development level" value="Tbio"/>
</dbReference>
<dbReference type="PRO" id="PR:P49753"/>
<dbReference type="Proteomes" id="UP000005640">
    <property type="component" value="Chromosome 14"/>
</dbReference>
<dbReference type="RNAct" id="P49753">
    <property type="molecule type" value="protein"/>
</dbReference>
<dbReference type="Bgee" id="ENSG00000119673">
    <property type="expression patterns" value="Expressed in apex of heart and 101 other cell types or tissues"/>
</dbReference>
<dbReference type="ExpressionAtlas" id="P49753">
    <property type="expression patterns" value="baseline and differential"/>
</dbReference>
<dbReference type="GO" id="GO:0005829">
    <property type="term" value="C:cytosol"/>
    <property type="evidence" value="ECO:0000304"/>
    <property type="project" value="Reactome"/>
</dbReference>
<dbReference type="GO" id="GO:0005759">
    <property type="term" value="C:mitochondrial matrix"/>
    <property type="evidence" value="ECO:0000304"/>
    <property type="project" value="Reactome"/>
</dbReference>
<dbReference type="GO" id="GO:0005739">
    <property type="term" value="C:mitochondrion"/>
    <property type="evidence" value="ECO:0000314"/>
    <property type="project" value="HGNC-UCL"/>
</dbReference>
<dbReference type="GO" id="GO:0005782">
    <property type="term" value="C:peroxisomal matrix"/>
    <property type="evidence" value="ECO:0000304"/>
    <property type="project" value="Reactome"/>
</dbReference>
<dbReference type="GO" id="GO:0052689">
    <property type="term" value="F:carboxylic ester hydrolase activity"/>
    <property type="evidence" value="ECO:0007669"/>
    <property type="project" value="UniProtKB-KW"/>
</dbReference>
<dbReference type="GO" id="GO:0047617">
    <property type="term" value="F:fatty acyl-CoA hydrolase activity"/>
    <property type="evidence" value="ECO:0000314"/>
    <property type="project" value="HGNC-UCL"/>
</dbReference>
<dbReference type="GO" id="GO:0006637">
    <property type="term" value="P:acyl-CoA metabolic process"/>
    <property type="evidence" value="ECO:0000314"/>
    <property type="project" value="HGNC-UCL"/>
</dbReference>
<dbReference type="GO" id="GO:0006631">
    <property type="term" value="P:fatty acid metabolic process"/>
    <property type="evidence" value="ECO:0000318"/>
    <property type="project" value="GO_Central"/>
</dbReference>
<dbReference type="GO" id="GO:0001676">
    <property type="term" value="P:long-chain fatty acid metabolic process"/>
    <property type="evidence" value="ECO:0000314"/>
    <property type="project" value="HGNC-UCL"/>
</dbReference>
<dbReference type="GO" id="GO:0000038">
    <property type="term" value="P:very long-chain fatty acid metabolic process"/>
    <property type="evidence" value="ECO:0000314"/>
    <property type="project" value="HGNC-UCL"/>
</dbReference>
<dbReference type="FunFam" id="2.60.40.2240:FF:000001">
    <property type="entry name" value="acyl-coenzyme A thioesterase 4"/>
    <property type="match status" value="1"/>
</dbReference>
<dbReference type="FunFam" id="3.40.50.1820:FF:000024">
    <property type="entry name" value="acyl-coenzyme A thioesterase 4"/>
    <property type="match status" value="1"/>
</dbReference>
<dbReference type="Gene3D" id="2.60.40.2240">
    <property type="entry name" value="Acyl-CoA thioester hydrolase/BAAT N-terminal domain"/>
    <property type="match status" value="1"/>
</dbReference>
<dbReference type="Gene3D" id="3.40.50.1820">
    <property type="entry name" value="alpha/beta hydrolase"/>
    <property type="match status" value="1"/>
</dbReference>
<dbReference type="InterPro" id="IPR029058">
    <property type="entry name" value="AB_hydrolase_fold"/>
</dbReference>
<dbReference type="InterPro" id="IPR016662">
    <property type="entry name" value="Acyl-CoA_thioEstase_long-chain"/>
</dbReference>
<dbReference type="InterPro" id="IPR014940">
    <property type="entry name" value="BAAT_C"/>
</dbReference>
<dbReference type="InterPro" id="IPR006862">
    <property type="entry name" value="Thio_Ohase/aa_AcTrfase"/>
</dbReference>
<dbReference type="InterPro" id="IPR042490">
    <property type="entry name" value="Thio_Ohase/BAAT_N"/>
</dbReference>
<dbReference type="PANTHER" id="PTHR10824:SF16">
    <property type="entry name" value="ACYL-COENZYME A THIOESTERASE 1-RELATED"/>
    <property type="match status" value="1"/>
</dbReference>
<dbReference type="PANTHER" id="PTHR10824">
    <property type="entry name" value="ACYL-COENZYME A THIOESTERASE-RELATED"/>
    <property type="match status" value="1"/>
</dbReference>
<dbReference type="Pfam" id="PF08840">
    <property type="entry name" value="BAAT_C"/>
    <property type="match status" value="1"/>
</dbReference>
<dbReference type="Pfam" id="PF04775">
    <property type="entry name" value="Bile_Hydr_Trans"/>
    <property type="match status" value="1"/>
</dbReference>
<dbReference type="PIRSF" id="PIRSF016521">
    <property type="entry name" value="Acyl-CoA_hydro"/>
    <property type="match status" value="1"/>
</dbReference>
<dbReference type="SUPFAM" id="SSF53474">
    <property type="entry name" value="alpha/beta-Hydrolases"/>
    <property type="match status" value="1"/>
</dbReference>
<evidence type="ECO:0000250" key="1">
    <source>
        <dbReference type="UniProtKB" id="Q9QYR9"/>
    </source>
</evidence>
<evidence type="ECO:0000255" key="2"/>
<evidence type="ECO:0000269" key="3">
    <source>
    </source>
</evidence>
<evidence type="ECO:0000269" key="4">
    <source>
    </source>
</evidence>
<evidence type="ECO:0000269" key="5">
    <source>
    </source>
</evidence>
<evidence type="ECO:0000269" key="6">
    <source>
    </source>
</evidence>
<evidence type="ECO:0000269" key="7">
    <source ref="4"/>
</evidence>
<evidence type="ECO:0000303" key="8">
    <source>
    </source>
</evidence>
<evidence type="ECO:0000303" key="9">
    <source>
    </source>
</evidence>
<evidence type="ECO:0000305" key="10"/>
<evidence type="ECO:0000305" key="11">
    <source>
    </source>
</evidence>
<evidence type="ECO:0000305" key="12">
    <source>
    </source>
</evidence>
<evidence type="ECO:0007829" key="13">
    <source>
        <dbReference type="PDB" id="3HLK"/>
    </source>
</evidence>
<keyword id="KW-0002">3D-structure</keyword>
<keyword id="KW-0007">Acetylation</keyword>
<keyword id="KW-0025">Alternative splicing</keyword>
<keyword id="KW-0276">Fatty acid metabolism</keyword>
<keyword id="KW-0378">Hydrolase</keyword>
<keyword id="KW-0443">Lipid metabolism</keyword>
<keyword id="KW-0496">Mitochondrion</keyword>
<keyword id="KW-1267">Proteomics identification</keyword>
<keyword id="KW-1185">Reference proteome</keyword>
<keyword id="KW-0719">Serine esterase</keyword>
<keyword id="KW-0809">Transit peptide</keyword>
<protein>
    <recommendedName>
        <fullName>Acyl-coenzyme A thioesterase 2, mitochondrial</fullName>
        <shortName>Acyl-CoA thioesterase 2</shortName>
        <ecNumber evidence="3 6">3.1.2.2</ecNumber>
    </recommendedName>
    <alternativeName>
        <fullName>Acyl-coenzyme A thioester hydrolase 2a</fullName>
    </alternativeName>
    <alternativeName>
        <fullName>CTE-Ia</fullName>
    </alternativeName>
    <alternativeName>
        <fullName>Long-chain acyl-CoA thioesterase 2</fullName>
    </alternativeName>
    <alternativeName>
        <fullName>ZAP128</fullName>
    </alternativeName>
</protein>
<organism>
    <name type="scientific">Homo sapiens</name>
    <name type="common">Human</name>
    <dbReference type="NCBI Taxonomy" id="9606"/>
    <lineage>
        <taxon>Eukaryota</taxon>
        <taxon>Metazoa</taxon>
        <taxon>Chordata</taxon>
        <taxon>Craniata</taxon>
        <taxon>Vertebrata</taxon>
        <taxon>Euteleostomi</taxon>
        <taxon>Mammalia</taxon>
        <taxon>Eutheria</taxon>
        <taxon>Euarchontoglires</taxon>
        <taxon>Primates</taxon>
        <taxon>Haplorrhini</taxon>
        <taxon>Catarrhini</taxon>
        <taxon>Hominidae</taxon>
        <taxon>Homo</taxon>
    </lineage>
</organism>
<reference key="1">
    <citation type="journal article" date="1995" name="Nature">
        <title>Cloning of a gene bearing missense mutations in early-onset familial Alzheimer's disease.</title>
        <authorList>
            <person name="Sherrington R."/>
            <person name="Rogaev E.I."/>
            <person name="Liang Y."/>
            <person name="Rogaeva E.A."/>
            <person name="Levesque G."/>
            <person name="Ikeda M."/>
            <person name="Chi H."/>
            <person name="Lin C."/>
            <person name="Li G."/>
            <person name="Holman K."/>
            <person name="Tsuda T."/>
            <person name="Mar L."/>
            <person name="Foncin J.-F."/>
            <person name="Bruni A.C."/>
            <person name="Montesi M.P."/>
            <person name="Sorbi S."/>
            <person name="Rainero I."/>
            <person name="Pinessi L."/>
            <person name="Nee L."/>
            <person name="Chumakov I."/>
            <person name="Pollen D."/>
            <person name="Brookes A."/>
            <person name="Sanseau P."/>
            <person name="Polinsky R.J."/>
            <person name="Wasco W."/>
            <person name="da Silva H.A.R."/>
            <person name="Haines J.L."/>
            <person name="Pericak-Vance M.A."/>
            <person name="Tanzi R.E."/>
            <person name="Roses A.D."/>
            <person name="Fraser P.E."/>
            <person name="Rommens J.M."/>
            <person name="St George-Hyslop P.H."/>
        </authorList>
    </citation>
    <scope>NUCLEOTIDE SEQUENCE [MRNA] (ISOFORM 2)</scope>
    <source>
        <tissue>Brain</tissue>
    </source>
</reference>
<reference key="2">
    <citation type="journal article" date="2006" name="FASEB J.">
        <title>Analysis of the mouse and human acyl-CoA thioesterase (ACOT) gene clusters shows that convergent, functional evolution results in a reduced number of human peroxisomal ACOTs.</title>
        <authorList>
            <person name="Hunt M.C."/>
            <person name="Rautanen A."/>
            <person name="Westin M.A.K."/>
            <person name="Svensson L.T."/>
            <person name="Alexson S.E.H."/>
        </authorList>
    </citation>
    <scope>NUCLEOTIDE SEQUENCE [MRNA] (ISOFORM 1)</scope>
    <scope>FUNCTION</scope>
    <scope>CATALYTIC ACTIVITY</scope>
    <scope>BIOPHYSICOCHEMICAL PROPERTIES</scope>
    <scope>PATHWAY</scope>
    <scope>SUBCELLULAR LOCATION</scope>
    <scope>TISSUE SPECIFICITY</scope>
    <scope>CAUTION</scope>
</reference>
<reference key="3">
    <citation type="journal article" date="2004" name="Nat. Genet.">
        <title>Complete sequencing and characterization of 21,243 full-length human cDNAs.</title>
        <authorList>
            <person name="Ota T."/>
            <person name="Suzuki Y."/>
            <person name="Nishikawa T."/>
            <person name="Otsuki T."/>
            <person name="Sugiyama T."/>
            <person name="Irie R."/>
            <person name="Wakamatsu A."/>
            <person name="Hayashi K."/>
            <person name="Sato H."/>
            <person name="Nagai K."/>
            <person name="Kimura K."/>
            <person name="Makita H."/>
            <person name="Sekine M."/>
            <person name="Obayashi M."/>
            <person name="Nishi T."/>
            <person name="Shibahara T."/>
            <person name="Tanaka T."/>
            <person name="Ishii S."/>
            <person name="Yamamoto J."/>
            <person name="Saito K."/>
            <person name="Kawai Y."/>
            <person name="Isono Y."/>
            <person name="Nakamura Y."/>
            <person name="Nagahari K."/>
            <person name="Murakami K."/>
            <person name="Yasuda T."/>
            <person name="Iwayanagi T."/>
            <person name="Wagatsuma M."/>
            <person name="Shiratori A."/>
            <person name="Sudo H."/>
            <person name="Hosoiri T."/>
            <person name="Kaku Y."/>
            <person name="Kodaira H."/>
            <person name="Kondo H."/>
            <person name="Sugawara M."/>
            <person name="Takahashi M."/>
            <person name="Kanda K."/>
            <person name="Yokoi T."/>
            <person name="Furuya T."/>
            <person name="Kikkawa E."/>
            <person name="Omura Y."/>
            <person name="Abe K."/>
            <person name="Kamihara K."/>
            <person name="Katsuta N."/>
            <person name="Sato K."/>
            <person name="Tanikawa M."/>
            <person name="Yamazaki M."/>
            <person name="Ninomiya K."/>
            <person name="Ishibashi T."/>
            <person name="Yamashita H."/>
            <person name="Murakawa K."/>
            <person name="Fujimori K."/>
            <person name="Tanai H."/>
            <person name="Kimata M."/>
            <person name="Watanabe M."/>
            <person name="Hiraoka S."/>
            <person name="Chiba Y."/>
            <person name="Ishida S."/>
            <person name="Ono Y."/>
            <person name="Takiguchi S."/>
            <person name="Watanabe S."/>
            <person name="Yosida M."/>
            <person name="Hotuta T."/>
            <person name="Kusano J."/>
            <person name="Kanehori K."/>
            <person name="Takahashi-Fujii A."/>
            <person name="Hara H."/>
            <person name="Tanase T.-O."/>
            <person name="Nomura Y."/>
            <person name="Togiya S."/>
            <person name="Komai F."/>
            <person name="Hara R."/>
            <person name="Takeuchi K."/>
            <person name="Arita M."/>
            <person name="Imose N."/>
            <person name="Musashino K."/>
            <person name="Yuuki H."/>
            <person name="Oshima A."/>
            <person name="Sasaki N."/>
            <person name="Aotsuka S."/>
            <person name="Yoshikawa Y."/>
            <person name="Matsunawa H."/>
            <person name="Ichihara T."/>
            <person name="Shiohata N."/>
            <person name="Sano S."/>
            <person name="Moriya S."/>
            <person name="Momiyama H."/>
            <person name="Satoh N."/>
            <person name="Takami S."/>
            <person name="Terashima Y."/>
            <person name="Suzuki O."/>
            <person name="Nakagawa S."/>
            <person name="Senoh A."/>
            <person name="Mizoguchi H."/>
            <person name="Goto Y."/>
            <person name="Shimizu F."/>
            <person name="Wakebe H."/>
            <person name="Hishigaki H."/>
            <person name="Watanabe T."/>
            <person name="Sugiyama A."/>
            <person name="Takemoto M."/>
            <person name="Kawakami B."/>
            <person name="Yamazaki M."/>
            <person name="Watanabe K."/>
            <person name="Kumagai A."/>
            <person name="Itakura S."/>
            <person name="Fukuzumi Y."/>
            <person name="Fujimori Y."/>
            <person name="Komiyama M."/>
            <person name="Tashiro H."/>
            <person name="Tanigami A."/>
            <person name="Fujiwara T."/>
            <person name="Ono T."/>
            <person name="Yamada K."/>
            <person name="Fujii Y."/>
            <person name="Ozaki K."/>
            <person name="Hirao M."/>
            <person name="Ohmori Y."/>
            <person name="Kawabata A."/>
            <person name="Hikiji T."/>
            <person name="Kobatake N."/>
            <person name="Inagaki H."/>
            <person name="Ikema Y."/>
            <person name="Okamoto S."/>
            <person name="Okitani R."/>
            <person name="Kawakami T."/>
            <person name="Noguchi S."/>
            <person name="Itoh T."/>
            <person name="Shigeta K."/>
            <person name="Senba T."/>
            <person name="Matsumura K."/>
            <person name="Nakajima Y."/>
            <person name="Mizuno T."/>
            <person name="Morinaga M."/>
            <person name="Sasaki M."/>
            <person name="Togashi T."/>
            <person name="Oyama M."/>
            <person name="Hata H."/>
            <person name="Watanabe M."/>
            <person name="Komatsu T."/>
            <person name="Mizushima-Sugano J."/>
            <person name="Satoh T."/>
            <person name="Shirai Y."/>
            <person name="Takahashi Y."/>
            <person name="Nakagawa K."/>
            <person name="Okumura K."/>
            <person name="Nagase T."/>
            <person name="Nomura N."/>
            <person name="Kikuchi H."/>
            <person name="Masuho Y."/>
            <person name="Yamashita R."/>
            <person name="Nakai K."/>
            <person name="Yada T."/>
            <person name="Nakamura Y."/>
            <person name="Ohara O."/>
            <person name="Isogai T."/>
            <person name="Sugano S."/>
        </authorList>
    </citation>
    <scope>NUCLEOTIDE SEQUENCE [LARGE SCALE MRNA] (ISOFORM 1)</scope>
    <scope>VARIANT ARG-475</scope>
    <source>
        <tissue>Placenta</tissue>
    </source>
</reference>
<reference key="4">
    <citation type="submission" date="2005-04" db="EMBL/GenBank/DDBJ databases">
        <authorList>
            <person name="Totoki Y."/>
            <person name="Toyoda A."/>
            <person name="Takeda T."/>
            <person name="Sakaki Y."/>
            <person name="Tanaka A."/>
            <person name="Yokoyama S."/>
        </authorList>
    </citation>
    <scope>NUCLEOTIDE SEQUENCE [LARGE SCALE MRNA] (ISOFORM 1)</scope>
    <scope>VARIANT ARG-475</scope>
    <source>
        <tissue>Spleen</tissue>
    </source>
</reference>
<reference key="5">
    <citation type="journal article" date="2004" name="Genome Res.">
        <title>The status, quality, and expansion of the NIH full-length cDNA project: the Mammalian Gene Collection (MGC).</title>
        <authorList>
            <consortium name="The MGC Project Team"/>
        </authorList>
    </citation>
    <scope>NUCLEOTIDE SEQUENCE [LARGE SCALE MRNA] (ISOFORM 1)</scope>
    <scope>VARIANT ARG-475</scope>
    <source>
        <tissue>Lung</tissue>
        <tissue>Uterus</tissue>
    </source>
</reference>
<reference key="6">
    <citation type="journal article" date="2000" name="Biochem. Biophys. Res. Commun.">
        <title>Identification of PTE2, a human peroxisomal long-chain acyl-CoA thioesterase.</title>
        <authorList>
            <person name="Jones J.M."/>
            <person name="Gould S.J."/>
        </authorList>
    </citation>
    <scope>NUCLEOTIDE SEQUENCE [MRNA] OF 35-483 (ISOFORM 1)</scope>
    <scope>FUNCTION</scope>
    <scope>CATALYTIC ACTIVITY</scope>
    <scope>PATHWAY</scope>
    <scope>CAUTION</scope>
    <scope>VARIANT ARG-475</scope>
</reference>
<reference key="7">
    <citation type="journal article" date="2009" name="Biochem. Biophys. Res. Commun.">
        <title>Crystal structure of human mitochondrial acyl-CoA thioesterase (ACOT2).</title>
        <authorList>
            <person name="Mandel C.R."/>
            <person name="Tweel B."/>
            <person name="Tong L."/>
        </authorList>
    </citation>
    <scope>X-RAY CRYSTALLOGRAPHY (2.10 ANGSTROMS) OF 46-483</scope>
    <scope>ACTIVE SITE</scope>
</reference>
<proteinExistence type="evidence at protein level"/>
<gene>
    <name type="primary">ACOT2</name>
    <name type="synonym">PTE2</name>
    <name type="synonym">PTE2A</name>
</gene>
<comment type="function">
    <text evidence="1 3 6">Catalyzes the hydrolysis of acyl-CoAs into free fatty acids and coenzyme A (CoASH), regulating their respective intracellular levels (PubMed:10944470, PubMed:16940157). Displays higher activity toward long chain acyl CoAs (C14-C20) (PubMed:10944470, PubMed:16940157). The enzyme is involved in enhancing the hepatic fatty acid oxidation in mitochondria (By similarity).</text>
</comment>
<comment type="catalytic activity">
    <reaction evidence="3 6">
        <text>hexadecanoyl-CoA + H2O = hexadecanoate + CoA + H(+)</text>
        <dbReference type="Rhea" id="RHEA:16645"/>
        <dbReference type="ChEBI" id="CHEBI:7896"/>
        <dbReference type="ChEBI" id="CHEBI:15377"/>
        <dbReference type="ChEBI" id="CHEBI:15378"/>
        <dbReference type="ChEBI" id="CHEBI:57287"/>
        <dbReference type="ChEBI" id="CHEBI:57379"/>
        <dbReference type="EC" id="3.1.2.2"/>
    </reaction>
    <physiologicalReaction direction="left-to-right" evidence="12">
        <dbReference type="Rhea" id="RHEA:16646"/>
    </physiologicalReaction>
</comment>
<comment type="catalytic activity">
    <reaction evidence="3 6">
        <text>tetradecanoyl-CoA + H2O = tetradecanoate + CoA + H(+)</text>
        <dbReference type="Rhea" id="RHEA:40119"/>
        <dbReference type="ChEBI" id="CHEBI:15377"/>
        <dbReference type="ChEBI" id="CHEBI:15378"/>
        <dbReference type="ChEBI" id="CHEBI:30807"/>
        <dbReference type="ChEBI" id="CHEBI:57287"/>
        <dbReference type="ChEBI" id="CHEBI:57385"/>
    </reaction>
    <physiologicalReaction direction="left-to-right" evidence="12">
        <dbReference type="Rhea" id="RHEA:40120"/>
    </physiologicalReaction>
</comment>
<comment type="catalytic activity">
    <reaction evidence="3 6">
        <text>octadecanoyl-CoA + H2O = octadecanoate + CoA + H(+)</text>
        <dbReference type="Rhea" id="RHEA:30139"/>
        <dbReference type="ChEBI" id="CHEBI:15377"/>
        <dbReference type="ChEBI" id="CHEBI:15378"/>
        <dbReference type="ChEBI" id="CHEBI:25629"/>
        <dbReference type="ChEBI" id="CHEBI:57287"/>
        <dbReference type="ChEBI" id="CHEBI:57394"/>
    </reaction>
    <physiologicalReaction direction="left-to-right" evidence="12">
        <dbReference type="Rhea" id="RHEA:30140"/>
    </physiologicalReaction>
</comment>
<comment type="catalytic activity">
    <reaction evidence="3 6">
        <text>eicosanoyl-CoA + H2O = eicosanoate + CoA + H(+)</text>
        <dbReference type="Rhea" id="RHEA:40147"/>
        <dbReference type="ChEBI" id="CHEBI:15377"/>
        <dbReference type="ChEBI" id="CHEBI:15378"/>
        <dbReference type="ChEBI" id="CHEBI:32360"/>
        <dbReference type="ChEBI" id="CHEBI:57287"/>
        <dbReference type="ChEBI" id="CHEBI:57380"/>
    </reaction>
    <physiologicalReaction direction="left-to-right" evidence="12">
        <dbReference type="Rhea" id="RHEA:40148"/>
    </physiologicalReaction>
</comment>
<comment type="catalytic activity">
    <reaction evidence="3 6">
        <text>decanoyl-CoA + H2O = decanoate + CoA + H(+)</text>
        <dbReference type="Rhea" id="RHEA:40059"/>
        <dbReference type="ChEBI" id="CHEBI:15377"/>
        <dbReference type="ChEBI" id="CHEBI:15378"/>
        <dbReference type="ChEBI" id="CHEBI:27689"/>
        <dbReference type="ChEBI" id="CHEBI:57287"/>
        <dbReference type="ChEBI" id="CHEBI:61430"/>
    </reaction>
    <physiologicalReaction direction="left-to-right" evidence="12">
        <dbReference type="Rhea" id="RHEA:40060"/>
    </physiologicalReaction>
</comment>
<comment type="catalytic activity">
    <reaction evidence="6">
        <text>dodecanoyl-CoA + H2O = dodecanoate + CoA + H(+)</text>
        <dbReference type="Rhea" id="RHEA:30135"/>
        <dbReference type="ChEBI" id="CHEBI:15377"/>
        <dbReference type="ChEBI" id="CHEBI:15378"/>
        <dbReference type="ChEBI" id="CHEBI:18262"/>
        <dbReference type="ChEBI" id="CHEBI:57287"/>
        <dbReference type="ChEBI" id="CHEBI:57375"/>
    </reaction>
    <physiologicalReaction direction="left-to-right" evidence="12">
        <dbReference type="Rhea" id="RHEA:30136"/>
    </physiologicalReaction>
</comment>
<comment type="catalytic activity">
    <reaction evidence="6">
        <text>(9Z)-octadecenoyl-CoA + H2O = (9Z)-octadecenoate + CoA + H(+)</text>
        <dbReference type="Rhea" id="RHEA:40139"/>
        <dbReference type="ChEBI" id="CHEBI:15377"/>
        <dbReference type="ChEBI" id="CHEBI:15378"/>
        <dbReference type="ChEBI" id="CHEBI:30823"/>
        <dbReference type="ChEBI" id="CHEBI:57287"/>
        <dbReference type="ChEBI" id="CHEBI:57387"/>
    </reaction>
    <physiologicalReaction direction="left-to-right" evidence="12">
        <dbReference type="Rhea" id="RHEA:40140"/>
    </physiologicalReaction>
</comment>
<comment type="catalytic activity">
    <reaction evidence="6">
        <text>(9Z)-hexadecenoyl-CoA + H2O = (9Z)-hexadecenoate + CoA + H(+)</text>
        <dbReference type="Rhea" id="RHEA:40131"/>
        <dbReference type="ChEBI" id="CHEBI:15377"/>
        <dbReference type="ChEBI" id="CHEBI:15378"/>
        <dbReference type="ChEBI" id="CHEBI:32372"/>
        <dbReference type="ChEBI" id="CHEBI:57287"/>
        <dbReference type="ChEBI" id="CHEBI:61540"/>
    </reaction>
    <physiologicalReaction direction="left-to-right" evidence="12">
        <dbReference type="Rhea" id="RHEA:40132"/>
    </physiologicalReaction>
</comment>
<comment type="catalytic activity">
    <reaction evidence="6">
        <text>(9E)-octadecenoyl-CoA + H2O = (9E)-octadecenoate + CoA + H(+)</text>
        <dbReference type="Rhea" id="RHEA:40723"/>
        <dbReference type="ChEBI" id="CHEBI:15377"/>
        <dbReference type="ChEBI" id="CHEBI:15378"/>
        <dbReference type="ChEBI" id="CHEBI:30825"/>
        <dbReference type="ChEBI" id="CHEBI:57287"/>
        <dbReference type="ChEBI" id="CHEBI:77537"/>
    </reaction>
    <physiologicalReaction direction="left-to-right" evidence="12">
        <dbReference type="Rhea" id="RHEA:40724"/>
    </physiologicalReaction>
</comment>
<comment type="catalytic activity">
    <reaction evidence="1">
        <text>(9Z,12Z)-octadecadienoyl-CoA + H2O = (9Z,12Z)-octadecadienoate + CoA + H(+)</text>
        <dbReference type="Rhea" id="RHEA:40143"/>
        <dbReference type="ChEBI" id="CHEBI:15377"/>
        <dbReference type="ChEBI" id="CHEBI:15378"/>
        <dbReference type="ChEBI" id="CHEBI:30245"/>
        <dbReference type="ChEBI" id="CHEBI:57287"/>
        <dbReference type="ChEBI" id="CHEBI:57383"/>
    </reaction>
    <physiologicalReaction direction="left-to-right" evidence="1">
        <dbReference type="Rhea" id="RHEA:40144"/>
    </physiologicalReaction>
</comment>
<comment type="biophysicochemical properties">
    <kinetics>
        <KM evidence="6">40.3 uM for C10-acyl-CoA</KM>
        <KM evidence="6">8.9 uM for C12-acyl-CoA</KM>
        <KM evidence="6">1.6 uM for C14-acyl-CoA</KM>
        <KM evidence="6">2 uM for C16-acyl-CoA</KM>
        <KM evidence="6">2.8 uM for C18-acyl-CoA</KM>
        <KM evidence="6">4.8 uM for C20-acyl-CoA</KM>
        <KM evidence="6">4.5 uM for C16:1-acyl-CoA</KM>
        <KM evidence="6">6.1 uM for C18:1-acyl-CoA</KM>
        <KM evidence="6">4.3 uM for C18:1-trans-acyl-CoA</KM>
        <Vmax evidence="6">212.0 nmol/min/mg enzyme with C10-acyl-CoA as substrate</Vmax>
        <Vmax evidence="6">681.0 nmol/min/mg enzyme with C12-acyl-CoA as substrate</Vmax>
        <Vmax evidence="6">766.0 nmol/min/mg enzyme with C14-acyl-CoA as substrate</Vmax>
        <Vmax evidence="6">656.0 nmol/min/mg enzyme with C16-acyl-CoA as substrate</Vmax>
        <Vmax evidence="6">488.0 nmol/min/mg enzyme with C18-acyl-CoA as substrate</Vmax>
        <Vmax evidence="6">408.0 nmol/min/mg enzyme with C20-acyl-CoA as substrate</Vmax>
        <Vmax evidence="6">661.0 nmol/min/mg enzyme with C16:1-acyl-CoA as substrate</Vmax>
        <Vmax evidence="6">304.0 nmol/min/mg enzyme with C18:1-acyl-CoA as substrate</Vmax>
        <Vmax evidence="6">418.0 nmol/min/mg enzyme with C18:1-trans-acyl-CoA as substrate</Vmax>
    </kinetics>
</comment>
<comment type="pathway">
    <text evidence="11 12">Lipid metabolism; fatty acid metabolism.</text>
</comment>
<comment type="subunit">
    <text evidence="1">Monomer.</text>
</comment>
<comment type="interaction">
    <interactant intactId="EBI-1052865">
        <id>P49753</id>
    </interactant>
    <interactant intactId="EBI-16423037">
        <id>Q9NZ94-2</id>
        <label>NLGN3</label>
    </interactant>
    <organismsDiffer>false</organismsDiffer>
    <experiments>2</experiments>
</comment>
<comment type="subcellular location">
    <subcellularLocation>
        <location evidence="6">Mitochondrion</location>
    </subcellularLocation>
</comment>
<comment type="alternative products">
    <event type="alternative splicing"/>
    <isoform>
        <id>P49753-1</id>
        <name>1</name>
        <sequence type="displayed"/>
    </isoform>
    <isoform>
        <id>P49753-2</id>
        <name>2</name>
        <sequence type="described" ref="VSP_012225 VSP_012226"/>
    </isoform>
</comment>
<comment type="tissue specificity">
    <text evidence="6">Strongest expression in heart, liver, muscle and kidney. Weak in placenta and pancreas.</text>
</comment>
<comment type="similarity">
    <text evidence="10">Belongs to the C/M/P thioester hydrolase family.</text>
</comment>
<comment type="caution">
    <text evidence="11 12">Was originally (PubMed:10944470) thought to be peroxisomal but was later shown (PubMed:16940157) to be mitochondrial.</text>
</comment>
<comment type="sequence caution" evidence="10">
    <conflict type="frameshift">
        <sequence resource="EMBL-CDS" id="AAC42007"/>
    </conflict>
</comment>
<name>ACOT2_HUMAN</name>
<sequence length="483" mass="53218">MSNKLLSPHPHSVVLRSEFKMASSPAVLRASRLYQWSLKSSAQFLGSPQLRQVGQIIRVPARMAATLILEPAGRCCWDEPVRIAVRGLAPEQPVTLRASLRDEKGALFQAHARYRADTLGELDLERAPALGGSFAGLEPMGLLWALEPEKPLVRLVKRDVRTPLAVELEVLDGHDPDPGRLLCQTRHERYFLPPGVRREPVRVGRVRGTLFLPPEPGPFPGIVDMFGTGGGLLEYRASLLAGKGFAVMALAYYNYEDLPKTMETLHLEYFEEAMNYLLSHPEVKGPGVGLLGISKGGELCLSMASFLKGITAAVVINGSVANVGGTLHYKGETLPPVGVNRNRIKVTKDGYADIVDVLNSPLEGPDQKSFIPVERAESTFLFLVGQDDHNWKSEFYANEACKRLQAHGRRKPQIICYPETGHYIEPPYFPLCRASLHALVGSPIIWGGEPRAHAMAQVDAWKQLQTFFHKHLGGHEGTIPSKV</sequence>
<feature type="transit peptide" description="Mitochondrion" evidence="2">
    <location>
        <begin position="1"/>
        <end status="unknown"/>
    </location>
</feature>
<feature type="chain" id="PRO_0000202147" description="Acyl-coenzyme A thioesterase 2, mitochondrial">
    <location>
        <begin status="unknown"/>
        <end position="483"/>
    </location>
</feature>
<feature type="short sequence motif" description="Microbody targeting signal" evidence="2">
    <location>
        <begin position="481"/>
        <end position="483"/>
    </location>
</feature>
<feature type="active site" description="Charge relay system" evidence="8">
    <location>
        <position position="294"/>
    </location>
</feature>
<feature type="active site" description="Charge relay system" evidence="8">
    <location>
        <position position="388"/>
    </location>
</feature>
<feature type="active site" description="Charge relay system" evidence="8">
    <location>
        <position position="422"/>
    </location>
</feature>
<feature type="modified residue" description="N6-acetyllysine" evidence="1">
    <location>
        <position position="104"/>
    </location>
</feature>
<feature type="modified residue" description="N6-succinyllysine" evidence="1">
    <location>
        <position position="470"/>
    </location>
</feature>
<feature type="splice variant" id="VSP_012225" description="In isoform 2." evidence="9">
    <location>
        <begin position="1"/>
        <end position="20"/>
    </location>
</feature>
<feature type="splice variant" id="VSP_012226" description="In isoform 2." evidence="9">
    <location>
        <begin position="53"/>
        <end position="214"/>
    </location>
</feature>
<feature type="sequence variant" id="VAR_057271" description="In dbSNP:rs11545741.">
    <original>R</original>
    <variation>S</variation>
    <location>
        <position position="16"/>
    </location>
</feature>
<feature type="sequence variant" id="VAR_016136" description="In dbSNP:rs7494." evidence="3 4 5 7">
    <original>H</original>
    <variation>R</variation>
    <location>
        <position position="475"/>
    </location>
</feature>
<feature type="sequence conflict" description="In Ref. 2; AAZ31237 and 3; BAA91989." evidence="10" ref="2 3">
    <original>E</original>
    <variation>V</variation>
    <location>
        <position position="167"/>
    </location>
</feature>
<feature type="sequence conflict" description="In Ref. 2; AAZ31237, 3; BAA91989, 4; BAD97355, 5; AAH04436/AAH06335/AAH06500 and 6; AAF97985." evidence="10" ref="2 3 4 5 6">
    <original>H</original>
    <variation>R</variation>
    <location>
        <position position="328"/>
    </location>
</feature>
<feature type="sequence conflict" description="In Ref. 5; AAH06335." evidence="10" ref="5">
    <original>A</original>
    <variation>V</variation>
    <location>
        <position position="454"/>
    </location>
</feature>
<feature type="strand" evidence="13">
    <location>
        <begin position="66"/>
        <end position="71"/>
    </location>
</feature>
<feature type="strand" evidence="13">
    <location>
        <begin position="82"/>
        <end position="87"/>
    </location>
</feature>
<feature type="strand" evidence="13">
    <location>
        <begin position="93"/>
        <end position="101"/>
    </location>
</feature>
<feature type="strand" evidence="13">
    <location>
        <begin position="107"/>
        <end position="115"/>
    </location>
</feature>
<feature type="turn" evidence="13">
    <location>
        <begin position="124"/>
        <end position="126"/>
    </location>
</feature>
<feature type="strand" evidence="13">
    <location>
        <begin position="131"/>
        <end position="133"/>
    </location>
</feature>
<feature type="helix" evidence="13">
    <location>
        <begin position="141"/>
        <end position="144"/>
    </location>
</feature>
<feature type="strand" evidence="13">
    <location>
        <begin position="147"/>
        <end position="150"/>
    </location>
</feature>
<feature type="strand" evidence="13">
    <location>
        <begin position="164"/>
        <end position="174"/>
    </location>
</feature>
<feature type="strand" evidence="13">
    <location>
        <begin position="181"/>
        <end position="192"/>
    </location>
</feature>
<feature type="strand" evidence="13">
    <location>
        <begin position="197"/>
        <end position="203"/>
    </location>
</feature>
<feature type="strand" evidence="13">
    <location>
        <begin position="206"/>
        <end position="212"/>
    </location>
</feature>
<feature type="strand" evidence="13">
    <location>
        <begin position="214"/>
        <end position="216"/>
    </location>
</feature>
<feature type="strand" evidence="13">
    <location>
        <begin position="221"/>
        <end position="225"/>
    </location>
</feature>
<feature type="helix" evidence="13">
    <location>
        <begin position="235"/>
        <end position="241"/>
    </location>
</feature>
<feature type="turn" evidence="13">
    <location>
        <begin position="242"/>
        <end position="244"/>
    </location>
</feature>
<feature type="strand" evidence="13">
    <location>
        <begin position="246"/>
        <end position="250"/>
    </location>
</feature>
<feature type="strand" evidence="13">
    <location>
        <begin position="253"/>
        <end position="255"/>
    </location>
</feature>
<feature type="strand" evidence="13">
    <location>
        <begin position="263"/>
        <end position="266"/>
    </location>
</feature>
<feature type="helix" evidence="13">
    <location>
        <begin position="267"/>
        <end position="278"/>
    </location>
</feature>
<feature type="strand" evidence="13">
    <location>
        <begin position="286"/>
        <end position="293"/>
    </location>
</feature>
<feature type="helix" evidence="13">
    <location>
        <begin position="295"/>
        <end position="306"/>
    </location>
</feature>
<feature type="strand" evidence="13">
    <location>
        <begin position="310"/>
        <end position="317"/>
    </location>
</feature>
<feature type="strand" evidence="13">
    <location>
        <begin position="324"/>
        <end position="329"/>
    </location>
</feature>
<feature type="strand" evidence="13">
    <location>
        <begin position="332"/>
        <end position="334"/>
    </location>
</feature>
<feature type="helix" evidence="13">
    <location>
        <begin position="341"/>
        <end position="343"/>
    </location>
</feature>
<feature type="strand" evidence="13">
    <location>
        <begin position="348"/>
        <end position="350"/>
    </location>
</feature>
<feature type="helix" evidence="13">
    <location>
        <begin position="364"/>
        <end position="369"/>
    </location>
</feature>
<feature type="helix" evidence="13">
    <location>
        <begin position="373"/>
        <end position="375"/>
    </location>
</feature>
<feature type="strand" evidence="13">
    <location>
        <begin position="378"/>
        <end position="385"/>
    </location>
</feature>
<feature type="helix" evidence="13">
    <location>
        <begin position="393"/>
        <end position="406"/>
    </location>
</feature>
<feature type="strand" evidence="13">
    <location>
        <begin position="413"/>
        <end position="417"/>
    </location>
</feature>
<feature type="helix" evidence="13">
    <location>
        <begin position="450"/>
        <end position="471"/>
    </location>
</feature>
<accession>P49753</accession>
<accession>Q3I5F8</accession>
<accession>Q53EK4</accession>
<accession>Q9NUX4</accession>